<keyword id="KW-0539">Nucleus</keyword>
<keyword id="KW-0597">Phosphoprotein</keyword>
<keyword id="KW-1185">Reference proteome</keyword>
<reference key="1">
    <citation type="submission" date="2005-10" db="EMBL/GenBank/DDBJ databases">
        <authorList>
            <consortium name="NIH - Mammalian Gene Collection (MGC) project"/>
        </authorList>
    </citation>
    <scope>NUCLEOTIDE SEQUENCE [LARGE SCALE MRNA]</scope>
    <source>
        <strain>Hereford</strain>
        <tissue>Ascending colon</tissue>
    </source>
</reference>
<sequence length="237" mass="24768">MRSRKLAGGVRSSARLRARSCSAASASAQDTHVTTSAQTACQTPSSHKATDRRTSKKFKYDKGHIVKSELQKHRSDSAATPSETPGTHEPLASAEDGASLLGKEAGGSTPQGTAGPLPGRCGTESDASPAETENEPLPPRHGAPVGGESNGGCPARDGAALDLEQGPGAPLLMDGSALLDDDSNQPMPVSRFFGNVELMQDLPPVSSSCPSMSRREFRKMHFRAKDDEEDDADGAET</sequence>
<name>CA174_BOVIN</name>
<dbReference type="EMBL" id="BC108133">
    <property type="protein sequence ID" value="AAI08134.1"/>
    <property type="molecule type" value="mRNA"/>
</dbReference>
<dbReference type="RefSeq" id="NP_001073258.1">
    <property type="nucleotide sequence ID" value="NM_001079790.1"/>
</dbReference>
<dbReference type="FunCoup" id="Q32PF7">
    <property type="interactions" value="1834"/>
</dbReference>
<dbReference type="STRING" id="9913.ENSBTAP00000042269"/>
<dbReference type="PaxDb" id="9913-ENSBTAP00000042269"/>
<dbReference type="GeneID" id="616142"/>
<dbReference type="KEGG" id="bta:616142"/>
<dbReference type="CTD" id="616142"/>
<dbReference type="eggNOG" id="ENOG502SANK">
    <property type="taxonomic scope" value="Eukaryota"/>
</dbReference>
<dbReference type="HOGENOM" id="CLU_096286_0_0_1"/>
<dbReference type="InParanoid" id="Q32PF7"/>
<dbReference type="OrthoDB" id="8730115at2759"/>
<dbReference type="TreeFam" id="TF336079"/>
<dbReference type="Proteomes" id="UP000009136">
    <property type="component" value="Unplaced"/>
</dbReference>
<dbReference type="GO" id="GO:0005634">
    <property type="term" value="C:nucleus"/>
    <property type="evidence" value="ECO:0007669"/>
    <property type="project" value="UniProtKB-SubCell"/>
</dbReference>
<dbReference type="InterPro" id="IPR031530">
    <property type="entry name" value="UPF0688"/>
</dbReference>
<dbReference type="PANTHER" id="PTHR28491">
    <property type="entry name" value="UPF0688 PROTEIN C1ORF174"/>
    <property type="match status" value="1"/>
</dbReference>
<dbReference type="PANTHER" id="PTHR28491:SF1">
    <property type="entry name" value="UPF0688 PROTEIN C1ORF174"/>
    <property type="match status" value="1"/>
</dbReference>
<dbReference type="Pfam" id="PF15772">
    <property type="entry name" value="UPF0688"/>
    <property type="match status" value="1"/>
</dbReference>
<evidence type="ECO:0000250" key="1"/>
<evidence type="ECO:0000250" key="2">
    <source>
        <dbReference type="UniProtKB" id="Q8IYL3"/>
    </source>
</evidence>
<evidence type="ECO:0000256" key="3">
    <source>
        <dbReference type="SAM" id="MobiDB-lite"/>
    </source>
</evidence>
<evidence type="ECO:0000305" key="4"/>
<protein>
    <recommendedName>
        <fullName>UPF0688 protein C1orf174 homolog</fullName>
    </recommendedName>
</protein>
<comment type="subcellular location">
    <subcellularLocation>
        <location evidence="1">Nucleus</location>
    </subcellularLocation>
</comment>
<comment type="similarity">
    <text evidence="4">Belongs to the UPF0688 family.</text>
</comment>
<proteinExistence type="evidence at transcript level"/>
<feature type="chain" id="PRO_0000294243" description="UPF0688 protein C1orf174 homolog">
    <location>
        <begin position="1"/>
        <end position="237"/>
    </location>
</feature>
<feature type="region of interest" description="Disordered" evidence="3">
    <location>
        <begin position="1"/>
        <end position="187"/>
    </location>
</feature>
<feature type="compositionally biased region" description="Low complexity" evidence="3">
    <location>
        <begin position="11"/>
        <end position="28"/>
    </location>
</feature>
<feature type="compositionally biased region" description="Polar residues" evidence="3">
    <location>
        <begin position="29"/>
        <end position="47"/>
    </location>
</feature>
<feature type="compositionally biased region" description="Basic and acidic residues" evidence="3">
    <location>
        <begin position="48"/>
        <end position="76"/>
    </location>
</feature>
<feature type="modified residue" description="Phosphoserine" evidence="2">
    <location>
        <position position="183"/>
    </location>
</feature>
<accession>Q32PF7</accession>
<organism>
    <name type="scientific">Bos taurus</name>
    <name type="common">Bovine</name>
    <dbReference type="NCBI Taxonomy" id="9913"/>
    <lineage>
        <taxon>Eukaryota</taxon>
        <taxon>Metazoa</taxon>
        <taxon>Chordata</taxon>
        <taxon>Craniata</taxon>
        <taxon>Vertebrata</taxon>
        <taxon>Euteleostomi</taxon>
        <taxon>Mammalia</taxon>
        <taxon>Eutheria</taxon>
        <taxon>Laurasiatheria</taxon>
        <taxon>Artiodactyla</taxon>
        <taxon>Ruminantia</taxon>
        <taxon>Pecora</taxon>
        <taxon>Bovidae</taxon>
        <taxon>Bovinae</taxon>
        <taxon>Bos</taxon>
    </lineage>
</organism>